<gene>
    <name evidence="1" type="primary">mtnA</name>
    <name type="ordered locus">Chy400_3271</name>
</gene>
<organism>
    <name type="scientific">Chloroflexus aurantiacus (strain ATCC 29364 / DSM 637 / Y-400-fl)</name>
    <dbReference type="NCBI Taxonomy" id="480224"/>
    <lineage>
        <taxon>Bacteria</taxon>
        <taxon>Bacillati</taxon>
        <taxon>Chloroflexota</taxon>
        <taxon>Chloroflexia</taxon>
        <taxon>Chloroflexales</taxon>
        <taxon>Chloroflexineae</taxon>
        <taxon>Chloroflexaceae</taxon>
        <taxon>Chloroflexus</taxon>
    </lineage>
</organism>
<sequence length="347" mass="36870">MELRTVWWENDAVCLIDQRKLPHTMEVVRCTDLAAVAYAIRSMQVRGAPAIGCTAAYGMALVAQQSVALTPSALLTELVQAKATLDSQRPTAVNLAWATSRMLRRAEAVASEGVEAIKHALHAEAEAIFAEDLAMCHAIGEHGASLIPPRGHVLTHCNAGGLATAGYGTALAPIRTAFAQGRPVHVFVDETRPFLQGARLTAWELLQAGIPQTLITDNMAAFMMQRGQIDCVIVGADRIAANGDVANKIGTYGLAVLARYHNIPFYVAAPSSTIDLATASGADIPIEERDPAEVTHIAGVAIAPQGVRAAHPAFDVTPNELVTAIITERGIVRPPYLAALRQLESGR</sequence>
<comment type="function">
    <text evidence="1">Catalyzes the interconversion of methylthioribose-1-phosphate (MTR-1-P) into methylthioribulose-1-phosphate (MTRu-1-P).</text>
</comment>
<comment type="catalytic activity">
    <reaction evidence="1">
        <text>5-(methylsulfanyl)-alpha-D-ribose 1-phosphate = 5-(methylsulfanyl)-D-ribulose 1-phosphate</text>
        <dbReference type="Rhea" id="RHEA:19989"/>
        <dbReference type="ChEBI" id="CHEBI:58533"/>
        <dbReference type="ChEBI" id="CHEBI:58548"/>
        <dbReference type="EC" id="5.3.1.23"/>
    </reaction>
</comment>
<comment type="pathway">
    <text evidence="1">Amino-acid biosynthesis; L-methionine biosynthesis via salvage pathway; L-methionine from S-methyl-5-thio-alpha-D-ribose 1-phosphate: step 1/6.</text>
</comment>
<comment type="similarity">
    <text evidence="2">Belongs to the eIF-2B alpha/beta/delta subunits family. MtnA subfamily.</text>
</comment>
<feature type="chain" id="PRO_1000187351" description="Methylthioribose-1-phosphate isomerase">
    <location>
        <begin position="1"/>
        <end position="347"/>
    </location>
</feature>
<feature type="active site" description="Proton donor" evidence="1">
    <location>
        <position position="237"/>
    </location>
</feature>
<feature type="binding site" evidence="1">
    <location>
        <begin position="46"/>
        <end position="48"/>
    </location>
    <ligand>
        <name>substrate</name>
    </ligand>
</feature>
<feature type="binding site" evidence="1">
    <location>
        <position position="89"/>
    </location>
    <ligand>
        <name>substrate</name>
    </ligand>
</feature>
<feature type="binding site" evidence="1">
    <location>
        <position position="196"/>
    </location>
    <ligand>
        <name>substrate</name>
    </ligand>
</feature>
<feature type="binding site" evidence="1">
    <location>
        <begin position="247"/>
        <end position="248"/>
    </location>
    <ligand>
        <name>substrate</name>
    </ligand>
</feature>
<feature type="site" description="Transition state stabilizer" evidence="1">
    <location>
        <position position="157"/>
    </location>
</feature>
<dbReference type="EC" id="5.3.1.23" evidence="1"/>
<dbReference type="EMBL" id="CP001364">
    <property type="protein sequence ID" value="ACM54649.1"/>
    <property type="molecule type" value="Genomic_DNA"/>
</dbReference>
<dbReference type="SMR" id="B9LBK4"/>
<dbReference type="KEGG" id="chl:Chy400_3271"/>
<dbReference type="HOGENOM" id="CLU_016218_1_2_0"/>
<dbReference type="OrthoDB" id="9803436at2"/>
<dbReference type="UniPathway" id="UPA00904">
    <property type="reaction ID" value="UER00874"/>
</dbReference>
<dbReference type="GO" id="GO:0046523">
    <property type="term" value="F:S-methyl-5-thioribose-1-phosphate isomerase activity"/>
    <property type="evidence" value="ECO:0007669"/>
    <property type="project" value="UniProtKB-UniRule"/>
</dbReference>
<dbReference type="GO" id="GO:0019509">
    <property type="term" value="P:L-methionine salvage from methylthioadenosine"/>
    <property type="evidence" value="ECO:0007669"/>
    <property type="project" value="UniProtKB-UniRule"/>
</dbReference>
<dbReference type="FunFam" id="1.20.120.420:FF:000007">
    <property type="entry name" value="Methylthioribose-1-phosphate isomerase"/>
    <property type="match status" value="1"/>
</dbReference>
<dbReference type="FunFam" id="3.40.50.10470:FF:000010">
    <property type="entry name" value="Methylthioribose-1-phosphate isomerase"/>
    <property type="match status" value="1"/>
</dbReference>
<dbReference type="Gene3D" id="1.20.120.420">
    <property type="entry name" value="translation initiation factor eif-2b, domain 1"/>
    <property type="match status" value="1"/>
</dbReference>
<dbReference type="Gene3D" id="3.40.50.10470">
    <property type="entry name" value="Translation initiation factor eif-2b, domain 2"/>
    <property type="match status" value="1"/>
</dbReference>
<dbReference type="HAMAP" id="MF_01678">
    <property type="entry name" value="Salvage_MtnA"/>
    <property type="match status" value="1"/>
</dbReference>
<dbReference type="InterPro" id="IPR000649">
    <property type="entry name" value="IF-2B-related"/>
</dbReference>
<dbReference type="InterPro" id="IPR005251">
    <property type="entry name" value="IF-M1Pi"/>
</dbReference>
<dbReference type="InterPro" id="IPR042529">
    <property type="entry name" value="IF_2B-like_C"/>
</dbReference>
<dbReference type="InterPro" id="IPR011559">
    <property type="entry name" value="Initiation_fac_2B_a/b/d"/>
</dbReference>
<dbReference type="InterPro" id="IPR027363">
    <property type="entry name" value="M1Pi_N"/>
</dbReference>
<dbReference type="InterPro" id="IPR037171">
    <property type="entry name" value="NagB/RpiA_transferase-like"/>
</dbReference>
<dbReference type="NCBIfam" id="TIGR00524">
    <property type="entry name" value="eIF-2B_rel"/>
    <property type="match status" value="1"/>
</dbReference>
<dbReference type="NCBIfam" id="NF004326">
    <property type="entry name" value="PRK05720.1"/>
    <property type="match status" value="1"/>
</dbReference>
<dbReference type="NCBIfam" id="TIGR00512">
    <property type="entry name" value="salvage_mtnA"/>
    <property type="match status" value="1"/>
</dbReference>
<dbReference type="PANTHER" id="PTHR43475">
    <property type="entry name" value="METHYLTHIORIBOSE-1-PHOSPHATE ISOMERASE"/>
    <property type="match status" value="1"/>
</dbReference>
<dbReference type="PANTHER" id="PTHR43475:SF1">
    <property type="entry name" value="METHYLTHIORIBOSE-1-PHOSPHATE ISOMERASE"/>
    <property type="match status" value="1"/>
</dbReference>
<dbReference type="Pfam" id="PF01008">
    <property type="entry name" value="IF-2B"/>
    <property type="match status" value="1"/>
</dbReference>
<dbReference type="SUPFAM" id="SSF100950">
    <property type="entry name" value="NagB/RpiA/CoA transferase-like"/>
    <property type="match status" value="1"/>
</dbReference>
<name>MTNA_CHLSY</name>
<proteinExistence type="inferred from homology"/>
<accession>B9LBK4</accession>
<protein>
    <recommendedName>
        <fullName evidence="1">Methylthioribose-1-phosphate isomerase</fullName>
        <shortName evidence="1">M1Pi</shortName>
        <shortName evidence="1">MTR-1-P isomerase</shortName>
        <ecNumber evidence="1">5.3.1.23</ecNumber>
    </recommendedName>
    <alternativeName>
        <fullName evidence="1">S-methyl-5-thioribose-1-phosphate isomerase</fullName>
    </alternativeName>
</protein>
<evidence type="ECO:0000255" key="1">
    <source>
        <dbReference type="HAMAP-Rule" id="MF_01678"/>
    </source>
</evidence>
<evidence type="ECO:0000305" key="2"/>
<keyword id="KW-0028">Amino-acid biosynthesis</keyword>
<keyword id="KW-0413">Isomerase</keyword>
<keyword id="KW-0486">Methionine biosynthesis</keyword>
<reference key="1">
    <citation type="submission" date="2009-01" db="EMBL/GenBank/DDBJ databases">
        <title>Complete sequence of Chloroflexus sp. Y-400-fl.</title>
        <authorList>
            <consortium name="US DOE Joint Genome Institute"/>
            <person name="Lucas S."/>
            <person name="Copeland A."/>
            <person name="Lapidus A."/>
            <person name="Glavina del Rio T."/>
            <person name="Dalin E."/>
            <person name="Tice H."/>
            <person name="Bruce D."/>
            <person name="Goodwin L."/>
            <person name="Pitluck S."/>
            <person name="Sims D."/>
            <person name="Kiss H."/>
            <person name="Brettin T."/>
            <person name="Detter J.C."/>
            <person name="Han C."/>
            <person name="Larimer F."/>
            <person name="Land M."/>
            <person name="Hauser L."/>
            <person name="Kyrpides N."/>
            <person name="Ovchinnikova G."/>
            <person name="Bryant D.A."/>
            <person name="Richardson P."/>
        </authorList>
    </citation>
    <scope>NUCLEOTIDE SEQUENCE [LARGE SCALE GENOMIC DNA]</scope>
    <source>
        <strain>ATCC 29364 / DSM 637 / Y-400-fl</strain>
    </source>
</reference>